<comment type="function">
    <text evidence="2 3">Binds GTP and exhibits intrinsic GTPase activity. May activate NF-kappa-B-mediated gene transcription. Promotes signal transduction through MTOR, activates RPS6KB1, and is a downstream target of the small GTPase-activating proteins TSC1 and TSC2 (By similarity).</text>
</comment>
<comment type="catalytic activity">
    <reaction evidence="2">
        <text>GTP + H2O = GDP + phosphate + H(+)</text>
        <dbReference type="Rhea" id="RHEA:19669"/>
        <dbReference type="ChEBI" id="CHEBI:15377"/>
        <dbReference type="ChEBI" id="CHEBI:15378"/>
        <dbReference type="ChEBI" id="CHEBI:37565"/>
        <dbReference type="ChEBI" id="CHEBI:43474"/>
        <dbReference type="ChEBI" id="CHEBI:58189"/>
    </reaction>
    <physiologicalReaction direction="left-to-right" evidence="2">
        <dbReference type="Rhea" id="RHEA:19670"/>
    </physiologicalReaction>
</comment>
<comment type="subunit">
    <text evidence="3">Interacts with MTOR.</text>
</comment>
<comment type="subcellular location">
    <subcellularLocation>
        <location evidence="3">Endomembrane system</location>
        <topology evidence="3">Lipid-anchor</topology>
        <orientation evidence="3">Cytoplasmic side</orientation>
    </subcellularLocation>
    <subcellularLocation>
        <location evidence="3">Cytoplasm</location>
    </subcellularLocation>
</comment>
<comment type="similarity">
    <text evidence="4">Belongs to the small GTPase superfamily. Rheb family.</text>
</comment>
<proteinExistence type="evidence at transcript level"/>
<organism>
    <name type="scientific">Bos taurus</name>
    <name type="common">Bovine</name>
    <dbReference type="NCBI Taxonomy" id="9913"/>
    <lineage>
        <taxon>Eukaryota</taxon>
        <taxon>Metazoa</taxon>
        <taxon>Chordata</taxon>
        <taxon>Craniata</taxon>
        <taxon>Vertebrata</taxon>
        <taxon>Euteleostomi</taxon>
        <taxon>Mammalia</taxon>
        <taxon>Eutheria</taxon>
        <taxon>Laurasiatheria</taxon>
        <taxon>Artiodactyla</taxon>
        <taxon>Ruminantia</taxon>
        <taxon>Pecora</taxon>
        <taxon>Bovidae</taxon>
        <taxon>Bovinae</taxon>
        <taxon>Bos</taxon>
    </lineage>
</organism>
<dbReference type="EC" id="3.6.5.-" evidence="2"/>
<dbReference type="EMBL" id="AY293823">
    <property type="protein sequence ID" value="AAP47271.1"/>
    <property type="molecule type" value="mRNA"/>
</dbReference>
<dbReference type="RefSeq" id="NP_858054.1">
    <property type="nucleotide sequence ID" value="NM_181668.1"/>
</dbReference>
<dbReference type="SMR" id="Q7YS69"/>
<dbReference type="FunCoup" id="Q7YS69">
    <property type="interactions" value="157"/>
</dbReference>
<dbReference type="STRING" id="9913.ENSBTAP00000008614"/>
<dbReference type="PaxDb" id="9913-ENSBTAP00000008614"/>
<dbReference type="GeneID" id="353300"/>
<dbReference type="KEGG" id="bta:353300"/>
<dbReference type="CTD" id="121268"/>
<dbReference type="eggNOG" id="KOG0395">
    <property type="taxonomic scope" value="Eukaryota"/>
</dbReference>
<dbReference type="InParanoid" id="Q7YS69"/>
<dbReference type="OrthoDB" id="25818at2759"/>
<dbReference type="Proteomes" id="UP000009136">
    <property type="component" value="Unplaced"/>
</dbReference>
<dbReference type="GO" id="GO:0005737">
    <property type="term" value="C:cytoplasm"/>
    <property type="evidence" value="ECO:0007669"/>
    <property type="project" value="UniProtKB-SubCell"/>
</dbReference>
<dbReference type="GO" id="GO:0012505">
    <property type="term" value="C:endomembrane system"/>
    <property type="evidence" value="ECO:0007669"/>
    <property type="project" value="UniProtKB-SubCell"/>
</dbReference>
<dbReference type="GO" id="GO:0005886">
    <property type="term" value="C:plasma membrane"/>
    <property type="evidence" value="ECO:0000318"/>
    <property type="project" value="GO_Central"/>
</dbReference>
<dbReference type="GO" id="GO:0019003">
    <property type="term" value="F:GDP binding"/>
    <property type="evidence" value="ECO:0000318"/>
    <property type="project" value="GO_Central"/>
</dbReference>
<dbReference type="GO" id="GO:0005525">
    <property type="term" value="F:GTP binding"/>
    <property type="evidence" value="ECO:0000318"/>
    <property type="project" value="GO_Central"/>
</dbReference>
<dbReference type="GO" id="GO:0003924">
    <property type="term" value="F:GTPase activity"/>
    <property type="evidence" value="ECO:0000318"/>
    <property type="project" value="GO_Central"/>
</dbReference>
<dbReference type="GO" id="GO:0046872">
    <property type="term" value="F:metal ion binding"/>
    <property type="evidence" value="ECO:0007669"/>
    <property type="project" value="UniProtKB-KW"/>
</dbReference>
<dbReference type="GO" id="GO:0007264">
    <property type="term" value="P:small GTPase-mediated signal transduction"/>
    <property type="evidence" value="ECO:0000318"/>
    <property type="project" value="GO_Central"/>
</dbReference>
<dbReference type="FunFam" id="3.40.50.300:FF:000971">
    <property type="entry name" value="GTPase RhebL1 isoform X2"/>
    <property type="match status" value="1"/>
</dbReference>
<dbReference type="Gene3D" id="3.40.50.300">
    <property type="entry name" value="P-loop containing nucleotide triphosphate hydrolases"/>
    <property type="match status" value="1"/>
</dbReference>
<dbReference type="InterPro" id="IPR027417">
    <property type="entry name" value="P-loop_NTPase"/>
</dbReference>
<dbReference type="InterPro" id="IPR005225">
    <property type="entry name" value="Small_GTP-bd"/>
</dbReference>
<dbReference type="InterPro" id="IPR001806">
    <property type="entry name" value="Small_GTPase"/>
</dbReference>
<dbReference type="InterPro" id="IPR020849">
    <property type="entry name" value="Small_GTPase_Ras-type"/>
</dbReference>
<dbReference type="NCBIfam" id="TIGR00231">
    <property type="entry name" value="small_GTP"/>
    <property type="match status" value="1"/>
</dbReference>
<dbReference type="PANTHER" id="PTHR24070">
    <property type="entry name" value="RAS, DI-RAS, AND RHEB FAMILY MEMBERS OF SMALL GTPASE SUPERFAMILY"/>
    <property type="match status" value="1"/>
</dbReference>
<dbReference type="Pfam" id="PF00071">
    <property type="entry name" value="Ras"/>
    <property type="match status" value="1"/>
</dbReference>
<dbReference type="PRINTS" id="PR00449">
    <property type="entry name" value="RASTRNSFRMNG"/>
</dbReference>
<dbReference type="SMART" id="SM00175">
    <property type="entry name" value="RAB"/>
    <property type="match status" value="1"/>
</dbReference>
<dbReference type="SMART" id="SM00173">
    <property type="entry name" value="RAS"/>
    <property type="match status" value="1"/>
</dbReference>
<dbReference type="SMART" id="SM00174">
    <property type="entry name" value="RHO"/>
    <property type="match status" value="1"/>
</dbReference>
<dbReference type="SUPFAM" id="SSF52540">
    <property type="entry name" value="P-loop containing nucleoside triphosphate hydrolases"/>
    <property type="match status" value="1"/>
</dbReference>
<dbReference type="PROSITE" id="PS51421">
    <property type="entry name" value="RAS"/>
    <property type="match status" value="1"/>
</dbReference>
<gene>
    <name type="primary">RHEBL1</name>
</gene>
<accession>Q7YS69</accession>
<protein>
    <recommendedName>
        <fullName>GTPase RhebL1</fullName>
        <ecNumber evidence="2">3.6.5.-</ecNumber>
    </recommendedName>
    <alternativeName>
        <fullName>Ras homolog enriched in brain-like protein 1</fullName>
        <shortName>Rheb-like protein 1</shortName>
    </alternativeName>
</protein>
<keyword id="KW-0963">Cytoplasm</keyword>
<keyword id="KW-0342">GTP-binding</keyword>
<keyword id="KW-0378">Hydrolase</keyword>
<keyword id="KW-0449">Lipoprotein</keyword>
<keyword id="KW-0460">Magnesium</keyword>
<keyword id="KW-0472">Membrane</keyword>
<keyword id="KW-0479">Metal-binding</keyword>
<keyword id="KW-0488">Methylation</keyword>
<keyword id="KW-0547">Nucleotide-binding</keyword>
<keyword id="KW-0636">Prenylation</keyword>
<keyword id="KW-1185">Reference proteome</keyword>
<evidence type="ECO:0000250" key="1"/>
<evidence type="ECO:0000250" key="2">
    <source>
        <dbReference type="UniProtKB" id="Q15382"/>
    </source>
</evidence>
<evidence type="ECO:0000250" key="3">
    <source>
        <dbReference type="UniProtKB" id="Q8TAI7"/>
    </source>
</evidence>
<evidence type="ECO:0000305" key="4"/>
<reference key="1">
    <citation type="journal article" date="2005" name="Mol. Biol. Rep.">
        <title>Identification and characterization of RHEBL1, a novel member of Ras family, which activates transcriptional activities of NF-kappa B.</title>
        <authorList>
            <person name="Yuan J."/>
            <person name="Shan Y."/>
            <person name="Chen X."/>
            <person name="Tang W."/>
            <person name="Luo K."/>
            <person name="Ni J."/>
            <person name="Wan B."/>
            <person name="Yu L."/>
        </authorList>
    </citation>
    <scope>NUCLEOTIDE SEQUENCE [MRNA]</scope>
</reference>
<feature type="chain" id="PRO_0000324290" description="GTPase RhebL1">
    <location>
        <begin position="1"/>
        <end position="178"/>
    </location>
</feature>
<feature type="propeptide" id="PRO_0000324291" description="Removed in mature form" evidence="1">
    <location>
        <begin position="179"/>
        <end position="181"/>
    </location>
</feature>
<feature type="short sequence motif" description="Effector region">
    <location>
        <begin position="33"/>
        <end position="41"/>
    </location>
</feature>
<feature type="binding site" evidence="2">
    <location>
        <begin position="30"/>
        <end position="36"/>
    </location>
    <ligand>
        <name>GTP</name>
        <dbReference type="ChEBI" id="CHEBI:37565"/>
    </ligand>
</feature>
<feature type="binding site" evidence="2">
    <location>
        <position position="36"/>
    </location>
    <ligand>
        <name>Mg(2+)</name>
        <dbReference type="ChEBI" id="CHEBI:18420"/>
    </ligand>
</feature>
<feature type="binding site" evidence="3">
    <location>
        <position position="61"/>
    </location>
    <ligand>
        <name>GTP</name>
        <dbReference type="ChEBI" id="CHEBI:37565"/>
    </ligand>
</feature>
<feature type="binding site" evidence="2">
    <location>
        <begin position="117"/>
        <end position="120"/>
    </location>
    <ligand>
        <name>GTP</name>
        <dbReference type="ChEBI" id="CHEBI:37565"/>
    </ligand>
</feature>
<feature type="binding site" evidence="2">
    <location>
        <begin position="147"/>
        <end position="148"/>
    </location>
    <ligand>
        <name>GTP</name>
        <dbReference type="ChEBI" id="CHEBI:37565"/>
    </ligand>
</feature>
<feature type="modified residue" description="Cysteine methyl ester" evidence="1">
    <location>
        <position position="178"/>
    </location>
</feature>
<feature type="lipid moiety-binding region" description="S-farnesyl cysteine" evidence="1">
    <location>
        <position position="178"/>
    </location>
</feature>
<sequence length="181" mass="20333">MPLVRLSQLVPLLLKGKTSLAHQFVEGEFLEDYDPTVENTYSKIVTVGKDEFHLHLVDTAGQDEYSILPYSFIIGVHGYVLVYSVTSLHSFQVIESLYQKLHEGHGKTRLPVVLVGNKADLSPDREVQAVEGKKLAASWGATFMESSARNNQLTQGIFTKVIQEIARVENSYGQERRCHLM</sequence>
<name>REBL1_BOVIN</name>